<reference key="1">
    <citation type="journal article" date="2002" name="Appl. Environ. Microbiol.">
        <title>Dothistroma pini, a forest pathogen, contains homologs of aflatoxin biosynthetic pathway genes.</title>
        <authorList>
            <person name="Bradshaw R.E."/>
            <person name="Bhatnagar D."/>
            <person name="Ganley R.J."/>
            <person name="Gillman C.J."/>
            <person name="Monahan B.J."/>
            <person name="Seconi J.M."/>
        </authorList>
    </citation>
    <scope>NUCLEOTIDE SEQUENCE [GENOMIC DNA]</scope>
    <source>
        <strain>NZE1 / ATCC MYA-605</strain>
    </source>
</reference>
<reference key="2">
    <citation type="journal article" date="2007" name="Fungal Genet. Biol.">
        <title>A fragmented aflatoxin-like gene cluster in the forest pathogen Dothistroma septosporum.</title>
        <authorList>
            <person name="Zhang S."/>
            <person name="Schwelm A."/>
            <person name="Jin H."/>
            <person name="Collins L.J."/>
            <person name="Bradshaw R.E."/>
        </authorList>
    </citation>
    <scope>NUCLEOTIDE SEQUENCE [GENOMIC DNA]</scope>
    <scope>INDUCTION</scope>
    <source>
        <strain>NZE7</strain>
    </source>
</reference>
<reference key="3">
    <citation type="submission" date="2009-11" db="EMBL/GenBank/DDBJ databases">
        <authorList>
            <person name="Bradshaw R.E."/>
            <person name="Monahan B.J."/>
            <person name="Gillman C.J."/>
        </authorList>
    </citation>
    <scope>NUCLEOTIDE SEQUENCE [GENOMIC DNA]</scope>
    <source>
        <strain>NZE1 / ATCC MYA-605</strain>
    </source>
</reference>
<reference key="4">
    <citation type="journal article" date="2006" name="Mycopathologia">
        <title>A polyketide synthase gene required for biosynthesis of the aflatoxin-like toxin, dothistromin.</title>
        <authorList>
            <person name="Bradshaw R.E."/>
            <person name="Jin H."/>
            <person name="Morgan B.S."/>
            <person name="Schwelm A."/>
            <person name="Teddy O.R."/>
            <person name="Young C.A."/>
            <person name="Zhang S."/>
        </authorList>
    </citation>
    <scope>FUNCTION</scope>
</reference>
<reference key="5">
    <citation type="journal article" date="2010" name="Toxins">
        <title>Genetics of dothistromin biosynthesis of Dothistroma septosporum: an update.</title>
        <authorList>
            <person name="Schwelm A."/>
            <person name="Bradshaw R.E."/>
        </authorList>
    </citation>
    <scope>REVIEW ON FUNCTION</scope>
    <scope>PATHWAY</scope>
</reference>
<reference key="6">
    <citation type="journal article" date="2013" name="Fungal Genet. Biol.">
        <title>Dothistromin genes at multiple separate loci are regulated by AflR.</title>
        <authorList>
            <person name="Chettri P."/>
            <person name="Ehrlich K.C."/>
            <person name="Cary J.W."/>
            <person name="Collemare J."/>
            <person name="Cox M.P."/>
            <person name="Griffiths S.A."/>
            <person name="Olson M.A."/>
            <person name="de Wit P.J."/>
            <person name="Bradshaw R.E."/>
        </authorList>
    </citation>
    <scope>FUNCTION</scope>
    <scope>INDUCTION</scope>
    <scope>PATHWAY</scope>
</reference>
<reference key="7">
    <citation type="journal article" date="2013" name="New Phytol.">
        <title>Fragmentation of an aflatoxin-like gene cluster in a forest pathogen.</title>
        <authorList>
            <person name="Bradshaw R.E."/>
            <person name="Slot J.C."/>
            <person name="Moore G.G."/>
            <person name="Chettri P."/>
            <person name="de Wit P.J."/>
            <person name="Ehrlich K.C."/>
            <person name="Ganley A.R."/>
            <person name="Olson M.A."/>
            <person name="Rokas A."/>
            <person name="Carbone I."/>
            <person name="Cox M.P."/>
        </authorList>
    </citation>
    <scope>FUNCTION</scope>
</reference>
<reference key="8">
    <citation type="journal article" date="2015" name="Fungal Biol.">
        <title>Regulation of the aflatoxin-like toxin dothistromin by AflJ.</title>
        <authorList>
            <person name="Chettri P."/>
            <person name="Ehrlich K.C."/>
            <person name="Bradshaw R.E."/>
        </authorList>
    </citation>
    <scope>INDUCTION</scope>
</reference>
<gene>
    <name evidence="11" type="primary">dotB</name>
</gene>
<feature type="signal peptide" evidence="4">
    <location>
        <begin position="1"/>
        <end position="18"/>
    </location>
</feature>
<feature type="chain" id="PRO_5004316381" description="Dothistromin biosynthesis peroxidase dotB">
    <location>
        <begin position="19"/>
        <end position="414"/>
    </location>
</feature>
<feature type="binding site" description="axial binding residue" evidence="2">
    <location>
        <position position="72"/>
    </location>
    <ligand>
        <name>heme</name>
        <dbReference type="ChEBI" id="CHEBI:30413"/>
    </ligand>
    <ligandPart>
        <name>Fe</name>
        <dbReference type="ChEBI" id="CHEBI:18248"/>
    </ligandPart>
</feature>
<feature type="glycosylation site" description="N-linked (GlcNAc...) asparagine" evidence="5">
    <location>
        <position position="187"/>
    </location>
</feature>
<feature type="glycosylation site" description="N-linked (GlcNAc...) asparagine" evidence="5">
    <location>
        <position position="241"/>
    </location>
</feature>
<feature type="glycosylation site" description="N-linked (GlcNAc...) asparagine" evidence="5">
    <location>
        <position position="328"/>
    </location>
</feature>
<accession>Q8TFD4</accession>
<organism>
    <name type="scientific">Dothistroma septosporum</name>
    <name type="common">Red band needle blight fungus</name>
    <name type="synonym">Mycosphaerella pini</name>
    <dbReference type="NCBI Taxonomy" id="64363"/>
    <lineage>
        <taxon>Eukaryota</taxon>
        <taxon>Fungi</taxon>
        <taxon>Dikarya</taxon>
        <taxon>Ascomycota</taxon>
        <taxon>Pezizomycotina</taxon>
        <taxon>Dothideomycetes</taxon>
        <taxon>Dothideomycetidae</taxon>
        <taxon>Mycosphaerellales</taxon>
        <taxon>Mycosphaerellaceae</taxon>
        <taxon>Dothistroma</taxon>
    </lineage>
</organism>
<sequence length="414" mass="44060">MHFFSAIVLTCLASTAVAYPALEQAASSAEFKEYQKQEKRQTLGFDAASQIVSTTGDHAWQAPGANDIRGPCPGLNSMANHGYIPRNGYTSDAQIIAAMQAVFNISPDFGGFLTVLGSAMGGDGLGFSIGGPPSASLLTATGLVGKPQGMSNTHNRFESDQSITRDDLYQTGNDVTLNMNFFQDLLNSSLPKGWYDIDVLGNHAVKRFQYSVANNPYFFKGLNTAFIPEATSALVTYLFANHSAACPAGCLDATNLKSFYSVTGSGSTLKYTPGHERIPDNWYKYPVGYGVANVFADMVTVYSKYSNQAAFGGNTGTVNSFTGLDVANITGGVYNAETLLQGNNLGCFLFNGMEFFMPDLISNGGVIGDVSGVVSSLTGTITSLLAPFNCPKLSGIDKKAFAIYPGWNDGKPRK</sequence>
<dbReference type="EC" id="1.11.1.-" evidence="14"/>
<dbReference type="EMBL" id="AF448056">
    <property type="protein sequence ID" value="AAL87046.1"/>
    <property type="molecule type" value="Genomic_DNA"/>
</dbReference>
<dbReference type="SMR" id="Q8TFD4"/>
<dbReference type="PeroxiBase" id="4232">
    <property type="entry name" value="MpiHalPrx01"/>
</dbReference>
<dbReference type="GlyCosmos" id="Q8TFD4">
    <property type="glycosylation" value="3 sites, No reported glycans"/>
</dbReference>
<dbReference type="OMA" id="HNRFEVD"/>
<dbReference type="GO" id="GO:0046872">
    <property type="term" value="F:metal ion binding"/>
    <property type="evidence" value="ECO:0007669"/>
    <property type="project" value="UniProtKB-KW"/>
</dbReference>
<dbReference type="GO" id="GO:0004601">
    <property type="term" value="F:peroxidase activity"/>
    <property type="evidence" value="ECO:0007669"/>
    <property type="project" value="UniProtKB-KW"/>
</dbReference>
<dbReference type="Gene3D" id="1.10.489.10">
    <property type="entry name" value="Chloroperoxidase-like"/>
    <property type="match status" value="1"/>
</dbReference>
<dbReference type="InterPro" id="IPR000028">
    <property type="entry name" value="Chloroperoxidase"/>
</dbReference>
<dbReference type="InterPro" id="IPR036851">
    <property type="entry name" value="Chloroperoxidase-like_sf"/>
</dbReference>
<dbReference type="PANTHER" id="PTHR33577:SF1">
    <property type="entry name" value="HEME HALOPEROXIDASE FAMILY PROFILE DOMAIN-CONTAINING PROTEIN"/>
    <property type="match status" value="1"/>
</dbReference>
<dbReference type="PANTHER" id="PTHR33577">
    <property type="entry name" value="STERIGMATOCYSTIN BIOSYNTHESIS PEROXIDASE STCC-RELATED"/>
    <property type="match status" value="1"/>
</dbReference>
<dbReference type="Pfam" id="PF01328">
    <property type="entry name" value="Peroxidase_2"/>
    <property type="match status" value="1"/>
</dbReference>
<dbReference type="SUPFAM" id="SSF47571">
    <property type="entry name" value="Cloroperoxidase"/>
    <property type="match status" value="1"/>
</dbReference>
<dbReference type="PROSITE" id="PS51405">
    <property type="entry name" value="HEME_HALOPEROXIDASE"/>
    <property type="match status" value="1"/>
</dbReference>
<proteinExistence type="evidence at transcript level"/>
<comment type="function">
    <text evidence="3 6 7 12 15 16 17">Peroxidase; part of the fragmented gene cluster that mediates the biosynthesis of dothistromin (DOTH), a polyketide toxin very similar in structure to the aflatoxin precursor, versicolorin B (PubMed:12039746, PubMed:17683963, PubMed:22069571, PubMed:23207690, PubMed:23448391). The first step of the pathway is the conversion of acetate to norsolorinic acid (NOR) and requires the fatty acid synthase subunits hexA and hexB, as well as the polyketide synthase pksA (PubMed:16649078, PubMed:23207690). PksA combines a hexanoyl starter unit and 7 malonyl-CoA extender units to synthesize the precursor NOR (By similarity). The hexanoyl starter unit is provided to the acyl-carrier protein (ACP) domain by the fungal fatty acid synthase hexA/hexB (By similarity). The second step is the conversion of NOR to averantin (AVN) and requires the norsolorinic acid ketoreductase nor1, which catalyzes the dehydration of norsolorinic acid to form (1'S)-averantin (PubMed:23207690). The cytochrome P450 monooxygenase avnA then catalyzes the hydroxylation of AVN to 5'hydroxyaverantin (HAVN) (PubMed:23207690). The next step is performed by adhA that transforms HAVN to averufin (AVF) (PubMed:23207690). Averufin might then be converted to hydroxyversicolorone by cypX and avfA (PubMed:23207690). Hydroxyversicolorone is further converted versiconal hemiacetal acetate (VHA) by moxY (PubMed:23207690). VHA is then the substrate for the versiconal hemiacetal acetate esterase est1 to yield versiconal (VAL) (PubMed:23207690). Versicolorin B synthase vbsA then converts VAL to versicolorin B (VERB) by closing the bisfuran ring (PubMed:16649078, PubMed:23207690). Then, the activity of the versicolorin B desaturase verB leads to versicolorin A (VERA) (PubMed:23207690). DotB, a predicted chloroperoxidase, may perform epoxidation of the A-ring of VERA (PubMed:23207690). Alternatively, a cytochrome P450, such as cypX or avnA could catalyze this step (PubMed:23207690). It is also possible that another, uncharacterized, cytochrome P450 enzyme is responsible for this step (PubMed:23207690). Opening of the epoxide could potentially be achieved by the epoxide hydrolase epoA (PubMed:23207690). However, epoA seems not to be required for DOTH biosynthesis, but other epoxide hydrolases may have the ability to complement this hydrolysis (PubMed:23207690). Alternatively, opening of the epoxide ring could be achieved non-enzymatically (PubMed:23207690). The next step is the deoxygenation of ring A to yield the 5,8-dihydroxyanthraquinone which is most likely catalyzed by the NADPH dehydrogenase encoded by ver1 (PubMed:23207690). The last stages of DOTH biosynthesis are proposed to involve hydroxylation of the bisfuran (PubMed:23207690). OrdB and norB might have oxidative roles here (PubMed:23207690). An alternative possibility is that cytochrome P450 monoogenases such as avnA and cypX might perform these steps in addition to previously proposed steps (PubMed:23207690).</text>
</comment>
<comment type="cofactor">
    <cofactor evidence="1">
        <name>heme b</name>
        <dbReference type="ChEBI" id="CHEBI:60344"/>
    </cofactor>
    <text evidence="1">Binds 1 heme b (iron(II)-protoporphyrin IX) group.</text>
</comment>
<comment type="pathway">
    <text evidence="12 16">Mycotoxin biosynthesis.</text>
</comment>
<comment type="induction">
    <text evidence="8 9 10">Expression is positively regulated by the dothistromin-specific transcription factors aflR and aflJ (PubMed:23207690, PubMed:25986547). Dothistromin biosynthetic proteins are co-regulated, showing a high level of expression at ealy exponential phase with a subsequent decline in older cultures (PubMed:17683963).</text>
</comment>
<comment type="similarity">
    <text evidence="13">Belongs to the chloroperoxidase family.</text>
</comment>
<keyword id="KW-0325">Glycoprotein</keyword>
<keyword id="KW-0349">Heme</keyword>
<keyword id="KW-0408">Iron</keyword>
<keyword id="KW-0479">Metal-binding</keyword>
<keyword id="KW-0560">Oxidoreductase</keyword>
<keyword id="KW-0575">Peroxidase</keyword>
<keyword id="KW-0732">Signal</keyword>
<name>DOTB_DOTSE</name>
<protein>
    <recommendedName>
        <fullName evidence="11">Dothistromin biosynthesis peroxidase dotB</fullName>
        <ecNumber evidence="14">1.11.1.-</ecNumber>
    </recommendedName>
    <alternativeName>
        <fullName evidence="11">Dothistromin biosynthesis protein B</fullName>
    </alternativeName>
</protein>
<evidence type="ECO:0000250" key="1">
    <source>
        <dbReference type="UniProtKB" id="B9W4V6"/>
    </source>
</evidence>
<evidence type="ECO:0000250" key="2">
    <source>
        <dbReference type="UniProtKB" id="P04963"/>
    </source>
</evidence>
<evidence type="ECO:0000250" key="3">
    <source>
        <dbReference type="UniProtKB" id="P50161"/>
    </source>
</evidence>
<evidence type="ECO:0000255" key="4"/>
<evidence type="ECO:0000255" key="5">
    <source>
        <dbReference type="PROSITE-ProRule" id="PRU00498"/>
    </source>
</evidence>
<evidence type="ECO:0000269" key="6">
    <source>
    </source>
</evidence>
<evidence type="ECO:0000269" key="7">
    <source>
    </source>
</evidence>
<evidence type="ECO:0000269" key="8">
    <source>
    </source>
</evidence>
<evidence type="ECO:0000269" key="9">
    <source>
    </source>
</evidence>
<evidence type="ECO:0000269" key="10">
    <source>
    </source>
</evidence>
<evidence type="ECO:0000303" key="11">
    <source>
    </source>
</evidence>
<evidence type="ECO:0000303" key="12">
    <source>
    </source>
</evidence>
<evidence type="ECO:0000305" key="13"/>
<evidence type="ECO:0000305" key="14">
    <source>
    </source>
</evidence>
<evidence type="ECO:0000305" key="15">
    <source>
    </source>
</evidence>
<evidence type="ECO:0000305" key="16">
    <source>
    </source>
</evidence>
<evidence type="ECO:0000305" key="17">
    <source>
    </source>
</evidence>